<protein>
    <recommendedName>
        <fullName>Transposon Ty1-PL Gag polyprotein</fullName>
    </recommendedName>
    <alternativeName>
        <fullName>Gag-p49</fullName>
    </alternativeName>
    <alternativeName>
        <fullName>Transposon Ty1 protein A</fullName>
        <shortName>TY1A</shortName>
        <shortName>TYA</shortName>
    </alternativeName>
    <alternativeName>
        <fullName>p58</fullName>
    </alternativeName>
    <component>
        <recommendedName>
            <fullName>Capsid protein</fullName>
            <shortName>CA</shortName>
        </recommendedName>
        <alternativeName>
            <fullName>Gag-p45</fullName>
        </alternativeName>
        <alternativeName>
            <fullName>p54</fullName>
        </alternativeName>
    </component>
    <component>
        <recommendedName>
            <fullName>Gag-p4</fullName>
        </recommendedName>
    </component>
</protein>
<organism>
    <name type="scientific">Saccharomyces cerevisiae (strain ATCC 204508 / S288c)</name>
    <name type="common">Baker's yeast</name>
    <dbReference type="NCBI Taxonomy" id="559292"/>
    <lineage>
        <taxon>Eukaryota</taxon>
        <taxon>Fungi</taxon>
        <taxon>Dikarya</taxon>
        <taxon>Ascomycota</taxon>
        <taxon>Saccharomycotina</taxon>
        <taxon>Saccharomycetes</taxon>
        <taxon>Saccharomycetales</taxon>
        <taxon>Saccharomycetaceae</taxon>
        <taxon>Saccharomyces</taxon>
    </lineage>
</organism>
<evidence type="ECO:0000250" key="1"/>
<evidence type="ECO:0000250" key="2">
    <source>
        <dbReference type="UniProtKB" id="Q12441"/>
    </source>
</evidence>
<evidence type="ECO:0000256" key="3">
    <source>
        <dbReference type="SAM" id="MobiDB-lite"/>
    </source>
</evidence>
<evidence type="ECO:0000269" key="4">
    <source>
    </source>
</evidence>
<gene>
    <name type="primary">TY1A-PL</name>
    <name type="synonym">YPLWTy1-1 GAG</name>
    <name type="ordered locus">YPL257W-A</name>
    <name type="ORF">P0725</name>
</gene>
<keyword id="KW-0963">Cytoplasm</keyword>
<keyword id="KW-0597">Phosphoprotein</keyword>
<keyword id="KW-1185">Reference proteome</keyword>
<keyword id="KW-0688">Ribosomal frameshifting</keyword>
<keyword id="KW-0694">RNA-binding</keyword>
<keyword id="KW-0814">Transposable element</keyword>
<dbReference type="EMBL" id="Z73613">
    <property type="protein sequence ID" value="CAA97983.1"/>
    <property type="molecule type" value="Genomic_DNA"/>
</dbReference>
<dbReference type="EMBL" id="Z73614">
    <property type="protein sequence ID" value="CAA97987.1"/>
    <property type="molecule type" value="Genomic_DNA"/>
</dbReference>
<dbReference type="EMBL" id="BK006949">
    <property type="protein sequence ID" value="DAA11179.1"/>
    <property type="molecule type" value="Genomic_DNA"/>
</dbReference>
<dbReference type="PIR" id="S53553">
    <property type="entry name" value="S53553"/>
</dbReference>
<dbReference type="RefSeq" id="NP_058153.3">
    <molecule id="P0CX73-1"/>
    <property type="nucleotide sequence ID" value="NM_001184426.3"/>
</dbReference>
<dbReference type="RefSeq" id="NP_058155.1">
    <molecule id="P0CX73-1"/>
    <property type="nucleotide sequence ID" value="NM_001184428.1"/>
</dbReference>
<dbReference type="RefSeq" id="NP_058170.1">
    <molecule id="P0CX73-1"/>
    <property type="nucleotide sequence ID" value="NM_001184405.1"/>
</dbReference>
<dbReference type="RefSeq" id="NP_058190.1">
    <molecule id="P0CX73-1"/>
    <property type="nucleotide sequence ID" value="NM_001184391.1"/>
</dbReference>
<dbReference type="SMR" id="P0CX73"/>
<dbReference type="BioGRID" id="31430">
    <property type="interactions" value="6"/>
</dbReference>
<dbReference type="BioGRID" id="32423">
    <property type="interactions" value="5"/>
</dbReference>
<dbReference type="BioGRID" id="35904">
    <property type="interactions" value="19"/>
</dbReference>
<dbReference type="BioGRID" id="36886">
    <property type="interactions" value="6"/>
</dbReference>
<dbReference type="FunCoup" id="P0CX73">
    <property type="interactions" value="66"/>
</dbReference>
<dbReference type="IntAct" id="P0CX73">
    <property type="interactions" value="1"/>
</dbReference>
<dbReference type="GlyGen" id="P0CX73">
    <property type="glycosylation" value="2 sites"/>
</dbReference>
<dbReference type="iPTMnet" id="P0CX73"/>
<dbReference type="GeneID" id="855816"/>
<dbReference type="KEGG" id="sce:YDR365W-A"/>
<dbReference type="KEGG" id="sce:YER137C-A"/>
<dbReference type="KEGG" id="sce:YLR157C-A"/>
<dbReference type="KEGG" id="sce:YPL257W-A"/>
<dbReference type="AGR" id="SGD:S000007357"/>
<dbReference type="SGD" id="S000007357">
    <property type="gene designation" value="YPL257W-A"/>
</dbReference>
<dbReference type="VEuPathDB" id="FungiDB:YDR365W-A"/>
<dbReference type="VEuPathDB" id="FungiDB:YER137C-A"/>
<dbReference type="VEuPathDB" id="FungiDB:YLR157C-A"/>
<dbReference type="VEuPathDB" id="FungiDB:YPL257W-A"/>
<dbReference type="HOGENOM" id="CLU_045291_1_0_1"/>
<dbReference type="InParanoid" id="P0CX73"/>
<dbReference type="OrthoDB" id="4051386at2759"/>
<dbReference type="Proteomes" id="UP000002311">
    <property type="component" value="Chromosome XVI"/>
</dbReference>
<dbReference type="RNAct" id="P0CX73">
    <property type="molecule type" value="protein"/>
</dbReference>
<dbReference type="GO" id="GO:0005737">
    <property type="term" value="C:cytoplasm"/>
    <property type="evidence" value="ECO:0007669"/>
    <property type="project" value="UniProtKB-SubCell"/>
</dbReference>
<dbReference type="GO" id="GO:0003723">
    <property type="term" value="F:RNA binding"/>
    <property type="evidence" value="ECO:0007669"/>
    <property type="project" value="UniProtKB-KW"/>
</dbReference>
<dbReference type="GO" id="GO:0075523">
    <property type="term" value="P:viral translational frameshifting"/>
    <property type="evidence" value="ECO:0007669"/>
    <property type="project" value="UniProtKB-KW"/>
</dbReference>
<dbReference type="InterPro" id="IPR015820">
    <property type="entry name" value="TYA"/>
</dbReference>
<dbReference type="Pfam" id="PF01021">
    <property type="entry name" value="TYA"/>
    <property type="match status" value="1"/>
</dbReference>
<sequence>MESQQLSQHSPISHGSACASVTSKEVHTNQDPLDVSASKTEECEKASTKANSQQTTTPASSAVPENPHHASPQPASVPPPQNGPYPQQCMMTQNQANPSGWSFYGHPSMIPYTPYQMSPMYFPPGPQSQFPQYPSSVGTPLSTPSPESGNTFTDSSSADSDMTSTKKYVRPPPMLTSPNDFPNWVKTYIKFLQNSNLGGIIPTVNGKPVRQITDDELTFLYNTFQIFAPSQFLPTWVKDILSVDYTDIMKILSKSIEKMQSDTQEANDIVTLANLQYNGSTPADAFETKVTNIIDRLNNNGIHINNKVACQLIMRGLSGEYKFLRYTRHRHLNMTVAELFLDIHAIYEEQQGSRNSKPNYRRNLSDEKNDSRSYTNTTKPKVIARNPQKTNNSKSKTARAHNVSTSNNSPSTDNDSISKSTTEPIQLNNKHDLHLRPGTY</sequence>
<accession>P0CX73</accession>
<accession>D3DM44</accession>
<accession>Q12162</accession>
<name>YP11A_YEAST</name>
<comment type="function">
    <text evidence="1">Capsid protein (CA) is the structural component of the virus-like particle (VLP), forming the shell that encapsulates the retrotransposons dimeric RNA genome. The particles are assembled from trimer-clustered units and there are holes in the capsid shells that allow for the diffusion of macromolecules. CA also has nucleocapsid-like chaperone activity, promoting primer tRNA(i)-Met annealing to the multipartite primer-binding site (PBS), dimerization of Ty1 RNA and initiation of reverse transcription (By similarity).</text>
</comment>
<comment type="subunit">
    <text evidence="1">Homotrimer.</text>
</comment>
<comment type="subcellular location">
    <subcellularLocation>
        <location evidence="1">Cytoplasm</location>
    </subcellularLocation>
</comment>
<comment type="alternative products">
    <event type="ribosomal frameshifting"/>
    <isoform>
        <id>P0CX73-1</id>
        <name>Transposon Ty1-PL Gag polyprotein</name>
        <sequence type="displayed"/>
    </isoform>
    <isoform>
        <id>Q12414-1</id>
        <name>Transposon Ty1-PL Gag-Pol polyprotein</name>
        <sequence type="external"/>
    </isoform>
    <text evidence="1">The Gag-Pol polyprotein is generated by a +1 ribosomal frameshift. The ratio of Gag:Gag-Pol varies between 20:1 and 5:1 (By similarity).</text>
</comment>
<comment type="induction">
    <text evidence="4">Ty1-PL is a highly expressed element. Induced under amino acid starvation conditions by GCN4.</text>
</comment>
<comment type="domain">
    <text evidence="1">The C-terminal RNA-binding region of CA is sufficient for all its nucleocapsid-like chaperone activities.</text>
</comment>
<comment type="miscellaneous">
    <text>Retrotransposons are mobile genetic entities that are able to replicate via an RNA intermediate and a reverse transcription step. In contrast to retroviruses, retrotransposons are non-infectious, lack an envelope and remain intracellular. Ty1 retrotransposons belong to the copia elements (pseudoviridae).</text>
</comment>
<comment type="miscellaneous">
    <molecule>Isoform Transposon Ty1-PL Gag polyprotein</molecule>
    <text>Produced by conventional translation.</text>
</comment>
<feature type="chain" id="PRO_0000409797" description="Transposon Ty1-PL Gag polyprotein">
    <location>
        <begin position="1"/>
        <end position="440"/>
    </location>
</feature>
<feature type="chain" id="PRO_0000409798" description="Capsid protein" evidence="1">
    <location>
        <begin position="1"/>
        <end position="401"/>
    </location>
</feature>
<feature type="peptide" id="PRO_0000409799" description="Gag-p4" evidence="1">
    <location>
        <begin position="402"/>
        <end position="440"/>
    </location>
</feature>
<feature type="region of interest" description="Disordered" evidence="3">
    <location>
        <begin position="1"/>
        <end position="93"/>
    </location>
</feature>
<feature type="region of interest" description="Disordered" evidence="3">
    <location>
        <begin position="126"/>
        <end position="174"/>
    </location>
</feature>
<feature type="region of interest" description="RNA-binding" evidence="1">
    <location>
        <begin position="299"/>
        <end position="401"/>
    </location>
</feature>
<feature type="region of interest" description="Disordered" evidence="3">
    <location>
        <begin position="352"/>
        <end position="440"/>
    </location>
</feature>
<feature type="compositionally biased region" description="Polar residues" evidence="3">
    <location>
        <begin position="1"/>
        <end position="23"/>
    </location>
</feature>
<feature type="compositionally biased region" description="Polar residues" evidence="3">
    <location>
        <begin position="48"/>
        <end position="60"/>
    </location>
</feature>
<feature type="compositionally biased region" description="Polar residues" evidence="3">
    <location>
        <begin position="127"/>
        <end position="152"/>
    </location>
</feature>
<feature type="compositionally biased region" description="Low complexity" evidence="3">
    <location>
        <begin position="153"/>
        <end position="165"/>
    </location>
</feature>
<feature type="compositionally biased region" description="Low complexity" evidence="3">
    <location>
        <begin position="402"/>
        <end position="418"/>
    </location>
</feature>
<feature type="compositionally biased region" description="Polar residues" evidence="3">
    <location>
        <begin position="419"/>
        <end position="428"/>
    </location>
</feature>
<feature type="compositionally biased region" description="Basic and acidic residues" evidence="3">
    <location>
        <begin position="429"/>
        <end position="440"/>
    </location>
</feature>
<feature type="site" description="Cleavage; by Ty1 protease" evidence="1">
    <location>
        <begin position="401"/>
        <end position="402"/>
    </location>
</feature>
<feature type="modified residue" description="Phosphoserine" evidence="2">
    <location>
        <position position="416"/>
    </location>
</feature>
<reference key="1">
    <citation type="journal article" date="1997" name="Nature">
        <title>The nucleotide sequence of Saccharomyces cerevisiae chromosome XVI.</title>
        <authorList>
            <person name="Bussey H."/>
            <person name="Storms R.K."/>
            <person name="Ahmed A."/>
            <person name="Albermann K."/>
            <person name="Allen E."/>
            <person name="Ansorge W."/>
            <person name="Araujo R."/>
            <person name="Aparicio A."/>
            <person name="Barrell B.G."/>
            <person name="Badcock K."/>
            <person name="Benes V."/>
            <person name="Botstein D."/>
            <person name="Bowman S."/>
            <person name="Brueckner M."/>
            <person name="Carpenter J."/>
            <person name="Cherry J.M."/>
            <person name="Chung E."/>
            <person name="Churcher C.M."/>
            <person name="Coster F."/>
            <person name="Davis K."/>
            <person name="Davis R.W."/>
            <person name="Dietrich F.S."/>
            <person name="Delius H."/>
            <person name="DiPaolo T."/>
            <person name="Dubois E."/>
            <person name="Duesterhoeft A."/>
            <person name="Duncan M."/>
            <person name="Floeth M."/>
            <person name="Fortin N."/>
            <person name="Friesen J.D."/>
            <person name="Fritz C."/>
            <person name="Goffeau A."/>
            <person name="Hall J."/>
            <person name="Hebling U."/>
            <person name="Heumann K."/>
            <person name="Hilbert H."/>
            <person name="Hillier L.W."/>
            <person name="Hunicke-Smith S."/>
            <person name="Hyman R.W."/>
            <person name="Johnston M."/>
            <person name="Kalman S."/>
            <person name="Kleine K."/>
            <person name="Komp C."/>
            <person name="Kurdi O."/>
            <person name="Lashkari D."/>
            <person name="Lew H."/>
            <person name="Lin A."/>
            <person name="Lin D."/>
            <person name="Louis E.J."/>
            <person name="Marathe R."/>
            <person name="Messenguy F."/>
            <person name="Mewes H.-W."/>
            <person name="Mirtipati S."/>
            <person name="Moestl D."/>
            <person name="Mueller-Auer S."/>
            <person name="Namath A."/>
            <person name="Nentwich U."/>
            <person name="Oefner P."/>
            <person name="Pearson D."/>
            <person name="Petel F.X."/>
            <person name="Pohl T.M."/>
            <person name="Purnelle B."/>
            <person name="Rajandream M.A."/>
            <person name="Rechmann S."/>
            <person name="Rieger M."/>
            <person name="Riles L."/>
            <person name="Roberts D."/>
            <person name="Schaefer M."/>
            <person name="Scharfe M."/>
            <person name="Scherens B."/>
            <person name="Schramm S."/>
            <person name="Schroeder M."/>
            <person name="Sdicu A.-M."/>
            <person name="Tettelin H."/>
            <person name="Urrestarazu L.A."/>
            <person name="Ushinsky S."/>
            <person name="Vierendeels F."/>
            <person name="Vissers S."/>
            <person name="Voss H."/>
            <person name="Walsh S.V."/>
            <person name="Wambutt R."/>
            <person name="Wang Y."/>
            <person name="Wedler E."/>
            <person name="Wedler H."/>
            <person name="Winnett E."/>
            <person name="Zhong W.-W."/>
            <person name="Zollner A."/>
            <person name="Vo D.H."/>
            <person name="Hani J."/>
        </authorList>
    </citation>
    <scope>NUCLEOTIDE SEQUENCE [LARGE SCALE GENOMIC DNA]</scope>
    <source>
        <strain>ATCC 204508 / S288c</strain>
    </source>
</reference>
<reference key="2">
    <citation type="journal article" date="2014" name="G3 (Bethesda)">
        <title>The reference genome sequence of Saccharomyces cerevisiae: Then and now.</title>
        <authorList>
            <person name="Engel S.R."/>
            <person name="Dietrich F.S."/>
            <person name="Fisk D.G."/>
            <person name="Binkley G."/>
            <person name="Balakrishnan R."/>
            <person name="Costanzo M.C."/>
            <person name="Dwight S.S."/>
            <person name="Hitz B.C."/>
            <person name="Karra K."/>
            <person name="Nash R.S."/>
            <person name="Weng S."/>
            <person name="Wong E.D."/>
            <person name="Lloyd P."/>
            <person name="Skrzypek M.S."/>
            <person name="Miyasato S.R."/>
            <person name="Simison M."/>
            <person name="Cherry J.M."/>
        </authorList>
    </citation>
    <scope>GENOME REANNOTATION</scope>
    <source>
        <strain>ATCC 204508 / S288c</strain>
    </source>
</reference>
<reference key="3">
    <citation type="journal article" date="1998" name="Genome Res.">
        <title>Transposable elements and genome organization: a comprehensive survey of retrotransposons revealed by the complete Saccharomyces cerevisiae genome sequence.</title>
        <authorList>
            <person name="Kim J.M."/>
            <person name="Vanguri S."/>
            <person name="Boeke J.D."/>
            <person name="Gabriel A."/>
            <person name="Voytas D.F."/>
        </authorList>
    </citation>
    <scope>NOMENCLATURE</scope>
</reference>
<reference key="4">
    <citation type="journal article" date="2002" name="Mol. Cell. Biol.">
        <title>Differential effects of chromatin and Gcn4 on the 50-fold range of expression among individual yeast Ty1 retrotransposons.</title>
        <authorList>
            <person name="Morillon A."/>
            <person name="Benard L."/>
            <person name="Springer M."/>
            <person name="Lesage P."/>
        </authorList>
    </citation>
    <scope>INDUCTION</scope>
</reference>
<reference key="5">
    <citation type="journal article" date="2005" name="Cytogenet. Genome Res.">
        <title>Happy together: the life and times of Ty retrotransposons and their hosts.</title>
        <authorList>
            <person name="Lesage P."/>
            <person name="Todeschini A.L."/>
        </authorList>
    </citation>
    <scope>REVIEW</scope>
</reference>
<proteinExistence type="evidence at transcript level"/>